<proteinExistence type="inferred from homology"/>
<accession>Q6C6I3</accession>
<feature type="chain" id="PRO_0000378946" description="Mitochondrial glycine transporter">
    <location>
        <begin position="1"/>
        <end position="304"/>
    </location>
</feature>
<feature type="transmembrane region" description="Helical; Name=1" evidence="2">
    <location>
        <begin position="9"/>
        <end position="34"/>
    </location>
</feature>
<feature type="transmembrane region" description="Helical; Name=2" evidence="2">
    <location>
        <begin position="57"/>
        <end position="83"/>
    </location>
</feature>
<feature type="transmembrane region" description="Helical; Name=3" evidence="2">
    <location>
        <begin position="108"/>
        <end position="133"/>
    </location>
</feature>
<feature type="transmembrane region" description="Helical; Name=4" evidence="2">
    <location>
        <begin position="161"/>
        <end position="184"/>
    </location>
</feature>
<feature type="transmembrane region" description="Helical; Name=5" evidence="2">
    <location>
        <begin position="213"/>
        <end position="239"/>
    </location>
</feature>
<feature type="transmembrane region" description="Helical; Name=6" evidence="2">
    <location>
        <begin position="268"/>
        <end position="286"/>
    </location>
</feature>
<feature type="repeat" description="Solcar 1" evidence="2">
    <location>
        <begin position="3"/>
        <end position="82"/>
    </location>
</feature>
<feature type="repeat" description="Solcar 2" evidence="2">
    <location>
        <begin position="106"/>
        <end position="186"/>
    </location>
</feature>
<feature type="repeat" description="Solcar 3" evidence="2">
    <location>
        <begin position="209"/>
        <end position="293"/>
    </location>
</feature>
<sequence length="304" mass="33461">MAGKSKNHIYAGFTSGLVSAVVLQPFDLLKTRVQQSNGKSMVQVIKSLNTPLDLWRGTLPSALRMSVGSAMYFTCLNTVREAVAGGRRLTVGDRSTSSLPKLTNTENLISGGLVRGTVGLLVMPITVIKVRYESSTYHYKSIVDAATSIYKHNGMRGFFYGWAATFARDAPYAGLYMLFYEQLKVALPSILFSDITTSSHSEKYYSSWSSAMINSVAAATSAGIATTCTNPFDTVKTRMQLAPKEYPNFLTSVKTIIQHEGIQALFRGLALRICRKACQAGISWCIYEDLVKRFERMNLPGPQL</sequence>
<comment type="function">
    <text evidence="2">Mitochondrial glycine transporter that imports glycine into the mitochondrial matrix. Plays an important role in providing glycine for the first enzymatic step in heme biosynthesis, the condensation of glycine with succinyl-CoA to produce 5-aminolevulinate (ALA) in the mitochondrial matrix.</text>
</comment>
<comment type="catalytic activity">
    <reaction evidence="1">
        <text>glycine(in) = glycine(out)</text>
        <dbReference type="Rhea" id="RHEA:70715"/>
        <dbReference type="ChEBI" id="CHEBI:57305"/>
    </reaction>
</comment>
<comment type="subcellular location">
    <subcellularLocation>
        <location evidence="2">Mitochondrion inner membrane</location>
        <topology evidence="2">Multi-pass membrane protein</topology>
    </subcellularLocation>
</comment>
<comment type="similarity">
    <text evidence="2">Belongs to the mitochondrial carrier (TC 2.A.29) family. SLC25A38 subfamily.</text>
</comment>
<keyword id="KW-0472">Membrane</keyword>
<keyword id="KW-0496">Mitochondrion</keyword>
<keyword id="KW-0999">Mitochondrion inner membrane</keyword>
<keyword id="KW-1185">Reference proteome</keyword>
<keyword id="KW-0677">Repeat</keyword>
<keyword id="KW-0812">Transmembrane</keyword>
<keyword id="KW-1133">Transmembrane helix</keyword>
<keyword id="KW-0813">Transport</keyword>
<protein>
    <recommendedName>
        <fullName evidence="2">Mitochondrial glycine transporter</fullName>
    </recommendedName>
    <alternativeName>
        <fullName evidence="2">Solute carrier family 25 member 38 homolog</fullName>
    </alternativeName>
</protein>
<evidence type="ECO:0000250" key="1">
    <source>
        <dbReference type="UniProtKB" id="Q96DW6"/>
    </source>
</evidence>
<evidence type="ECO:0000255" key="2">
    <source>
        <dbReference type="HAMAP-Rule" id="MF_03064"/>
    </source>
</evidence>
<organism>
    <name type="scientific">Yarrowia lipolytica (strain CLIB 122 / E 150)</name>
    <name type="common">Yeast</name>
    <name type="synonym">Candida lipolytica</name>
    <dbReference type="NCBI Taxonomy" id="284591"/>
    <lineage>
        <taxon>Eukaryota</taxon>
        <taxon>Fungi</taxon>
        <taxon>Dikarya</taxon>
        <taxon>Ascomycota</taxon>
        <taxon>Saccharomycotina</taxon>
        <taxon>Dipodascomycetes</taxon>
        <taxon>Dipodascales</taxon>
        <taxon>Dipodascales incertae sedis</taxon>
        <taxon>Yarrowia</taxon>
    </lineage>
</organism>
<reference key="1">
    <citation type="journal article" date="2004" name="Nature">
        <title>Genome evolution in yeasts.</title>
        <authorList>
            <person name="Dujon B."/>
            <person name="Sherman D."/>
            <person name="Fischer G."/>
            <person name="Durrens P."/>
            <person name="Casaregola S."/>
            <person name="Lafontaine I."/>
            <person name="de Montigny J."/>
            <person name="Marck C."/>
            <person name="Neuveglise C."/>
            <person name="Talla E."/>
            <person name="Goffard N."/>
            <person name="Frangeul L."/>
            <person name="Aigle M."/>
            <person name="Anthouard V."/>
            <person name="Babour A."/>
            <person name="Barbe V."/>
            <person name="Barnay S."/>
            <person name="Blanchin S."/>
            <person name="Beckerich J.-M."/>
            <person name="Beyne E."/>
            <person name="Bleykasten C."/>
            <person name="Boisrame A."/>
            <person name="Boyer J."/>
            <person name="Cattolico L."/>
            <person name="Confanioleri F."/>
            <person name="de Daruvar A."/>
            <person name="Despons L."/>
            <person name="Fabre E."/>
            <person name="Fairhead C."/>
            <person name="Ferry-Dumazet H."/>
            <person name="Groppi A."/>
            <person name="Hantraye F."/>
            <person name="Hennequin C."/>
            <person name="Jauniaux N."/>
            <person name="Joyet P."/>
            <person name="Kachouri R."/>
            <person name="Kerrest A."/>
            <person name="Koszul R."/>
            <person name="Lemaire M."/>
            <person name="Lesur I."/>
            <person name="Ma L."/>
            <person name="Muller H."/>
            <person name="Nicaud J.-M."/>
            <person name="Nikolski M."/>
            <person name="Oztas S."/>
            <person name="Ozier-Kalogeropoulos O."/>
            <person name="Pellenz S."/>
            <person name="Potier S."/>
            <person name="Richard G.-F."/>
            <person name="Straub M.-L."/>
            <person name="Suleau A."/>
            <person name="Swennen D."/>
            <person name="Tekaia F."/>
            <person name="Wesolowski-Louvel M."/>
            <person name="Westhof E."/>
            <person name="Wirth B."/>
            <person name="Zeniou-Meyer M."/>
            <person name="Zivanovic Y."/>
            <person name="Bolotin-Fukuhara M."/>
            <person name="Thierry A."/>
            <person name="Bouchier C."/>
            <person name="Caudron B."/>
            <person name="Scarpelli C."/>
            <person name="Gaillardin C."/>
            <person name="Weissenbach J."/>
            <person name="Wincker P."/>
            <person name="Souciet J.-L."/>
        </authorList>
    </citation>
    <scope>NUCLEOTIDE SEQUENCE [LARGE SCALE GENOMIC DNA]</scope>
    <source>
        <strain>CLIB 122 / E 150</strain>
    </source>
</reference>
<dbReference type="EMBL" id="CR382131">
    <property type="protein sequence ID" value="CAG79319.1"/>
    <property type="molecule type" value="Genomic_DNA"/>
</dbReference>
<dbReference type="RefSeq" id="XP_503729.1">
    <property type="nucleotide sequence ID" value="XM_503729.1"/>
</dbReference>
<dbReference type="SMR" id="Q6C6I3"/>
<dbReference type="FunCoup" id="Q6C6I3">
    <property type="interactions" value="104"/>
</dbReference>
<dbReference type="STRING" id="284591.Q6C6I3"/>
<dbReference type="EnsemblFungi" id="CAG79319">
    <property type="protein sequence ID" value="CAG79319"/>
    <property type="gene ID" value="YALI0_E09284g"/>
</dbReference>
<dbReference type="KEGG" id="yli:2912529"/>
<dbReference type="VEuPathDB" id="FungiDB:YALI0_E09284g"/>
<dbReference type="HOGENOM" id="CLU_015166_0_3_1"/>
<dbReference type="InParanoid" id="Q6C6I3"/>
<dbReference type="OMA" id="WGIYEEL"/>
<dbReference type="OrthoDB" id="7614at4891"/>
<dbReference type="Proteomes" id="UP000001300">
    <property type="component" value="Chromosome E"/>
</dbReference>
<dbReference type="GO" id="GO:0005743">
    <property type="term" value="C:mitochondrial inner membrane"/>
    <property type="evidence" value="ECO:0007669"/>
    <property type="project" value="UniProtKB-SubCell"/>
</dbReference>
<dbReference type="GO" id="GO:0005739">
    <property type="term" value="C:mitochondrion"/>
    <property type="evidence" value="ECO:0000318"/>
    <property type="project" value="GO_Central"/>
</dbReference>
<dbReference type="GO" id="GO:0015187">
    <property type="term" value="F:glycine transmembrane transporter activity"/>
    <property type="evidence" value="ECO:0000318"/>
    <property type="project" value="GO_Central"/>
</dbReference>
<dbReference type="GO" id="GO:1904983">
    <property type="term" value="P:glycine import into mitochondrion"/>
    <property type="evidence" value="ECO:0000318"/>
    <property type="project" value="GO_Central"/>
</dbReference>
<dbReference type="GO" id="GO:0006783">
    <property type="term" value="P:heme biosynthetic process"/>
    <property type="evidence" value="ECO:0007669"/>
    <property type="project" value="EnsemblFungi"/>
</dbReference>
<dbReference type="FunFam" id="1.50.40.10:FF:000103">
    <property type="entry name" value="Mitochondrial glycine transporter"/>
    <property type="match status" value="1"/>
</dbReference>
<dbReference type="Gene3D" id="1.50.40.10">
    <property type="entry name" value="Mitochondrial carrier domain"/>
    <property type="match status" value="1"/>
</dbReference>
<dbReference type="HAMAP" id="MF_03064">
    <property type="entry name" value="SLC25A38"/>
    <property type="match status" value="1"/>
</dbReference>
<dbReference type="InterPro" id="IPR030847">
    <property type="entry name" value="Hem25/SLC25A38"/>
</dbReference>
<dbReference type="InterPro" id="IPR018108">
    <property type="entry name" value="Mitochondrial_sb/sol_carrier"/>
</dbReference>
<dbReference type="InterPro" id="IPR023395">
    <property type="entry name" value="Mt_carrier_dom_sf"/>
</dbReference>
<dbReference type="PANTHER" id="PTHR46181">
    <property type="entry name" value="MITOCHONDRIAL GLYCINE TRANSPORTER"/>
    <property type="match status" value="1"/>
</dbReference>
<dbReference type="PANTHER" id="PTHR46181:SF3">
    <property type="entry name" value="MITOCHONDRIAL GLYCINE TRANSPORTER"/>
    <property type="match status" value="1"/>
</dbReference>
<dbReference type="Pfam" id="PF00153">
    <property type="entry name" value="Mito_carr"/>
    <property type="match status" value="3"/>
</dbReference>
<dbReference type="SUPFAM" id="SSF103506">
    <property type="entry name" value="Mitochondrial carrier"/>
    <property type="match status" value="1"/>
</dbReference>
<dbReference type="PROSITE" id="PS50920">
    <property type="entry name" value="SOLCAR"/>
    <property type="match status" value="3"/>
</dbReference>
<gene>
    <name type="ordered locus">YALI0E09284g</name>
</gene>
<name>S2538_YARLI</name>